<evidence type="ECO:0000255" key="1">
    <source>
        <dbReference type="HAMAP-Rule" id="MF_01633"/>
    </source>
</evidence>
<gene>
    <name evidence="1" type="primary">queC</name>
    <name type="ordered locus">Krad_4380</name>
</gene>
<comment type="function">
    <text evidence="1">Catalyzes the ATP-dependent conversion of 7-carboxy-7-deazaguanine (CDG) to 7-cyano-7-deazaguanine (preQ(0)).</text>
</comment>
<comment type="catalytic activity">
    <reaction evidence="1">
        <text>7-carboxy-7-deazaguanine + NH4(+) + ATP = 7-cyano-7-deazaguanine + ADP + phosphate + H2O + H(+)</text>
        <dbReference type="Rhea" id="RHEA:27982"/>
        <dbReference type="ChEBI" id="CHEBI:15377"/>
        <dbReference type="ChEBI" id="CHEBI:15378"/>
        <dbReference type="ChEBI" id="CHEBI:28938"/>
        <dbReference type="ChEBI" id="CHEBI:30616"/>
        <dbReference type="ChEBI" id="CHEBI:43474"/>
        <dbReference type="ChEBI" id="CHEBI:45075"/>
        <dbReference type="ChEBI" id="CHEBI:61036"/>
        <dbReference type="ChEBI" id="CHEBI:456216"/>
        <dbReference type="EC" id="6.3.4.20"/>
    </reaction>
</comment>
<comment type="cofactor">
    <cofactor evidence="1">
        <name>Zn(2+)</name>
        <dbReference type="ChEBI" id="CHEBI:29105"/>
    </cofactor>
    <text evidence="1">Binds 1 zinc ion per subunit.</text>
</comment>
<comment type="pathway">
    <text evidence="1">Purine metabolism; 7-cyano-7-deazaguanine biosynthesis.</text>
</comment>
<comment type="similarity">
    <text evidence="1">Belongs to the QueC family.</text>
</comment>
<name>QUEC_KINRD</name>
<protein>
    <recommendedName>
        <fullName evidence="1">7-cyano-7-deazaguanine synthase</fullName>
        <ecNumber evidence="1">6.3.4.20</ecNumber>
    </recommendedName>
    <alternativeName>
        <fullName evidence="1">7-cyano-7-carbaguanine synthase</fullName>
    </alternativeName>
    <alternativeName>
        <fullName evidence="1">PreQ(0) synthase</fullName>
    </alternativeName>
    <alternativeName>
        <fullName evidence="1">Queuosine biosynthesis protein QueC</fullName>
    </alternativeName>
</protein>
<reference key="1">
    <citation type="journal article" date="2008" name="PLoS ONE">
        <title>Survival in nuclear waste, extreme resistance, and potential applications gleaned from the genome sequence of Kineococcus radiotolerans SRS30216.</title>
        <authorList>
            <person name="Bagwell C.E."/>
            <person name="Bhat S."/>
            <person name="Hawkins G.M."/>
            <person name="Smith B.W."/>
            <person name="Biswas T."/>
            <person name="Hoover T.R."/>
            <person name="Saunders E."/>
            <person name="Han C.S."/>
            <person name="Tsodikov O.V."/>
            <person name="Shimkets L.J."/>
        </authorList>
    </citation>
    <scope>NUCLEOTIDE SEQUENCE [LARGE SCALE GENOMIC DNA]</scope>
    <source>
        <strain>ATCC BAA-149 / DSM 14245 / SRS30216</strain>
    </source>
</reference>
<sequence>MDRPAVVLLSGGLDSTTVLAIAKSQGFTPYALSFAYGQRHAVELDAARRVATALGAAGHVIATIDLTVFGGSALTADIAVPKHDTVEDLQADIPITYVPARNTIFLSYALAYAEVVGAGDIFIGVNALDYSGYPDCRPEYVDAFQAMGRLATRAGVQGTELTIHAPLMQMTKADIVRAGLALGVDYGMTSSCYDPDAAGHPCGHCDSCLLRLNGFAEAGSTDPLPYRGA</sequence>
<accession>A6WGA4</accession>
<dbReference type="EC" id="6.3.4.20" evidence="1"/>
<dbReference type="EMBL" id="CP000750">
    <property type="protein sequence ID" value="ABS05843.1"/>
    <property type="molecule type" value="Genomic_DNA"/>
</dbReference>
<dbReference type="RefSeq" id="WP_012085855.1">
    <property type="nucleotide sequence ID" value="NC_009664.2"/>
</dbReference>
<dbReference type="SMR" id="A6WGA4"/>
<dbReference type="STRING" id="266940.Krad_4380"/>
<dbReference type="KEGG" id="kra:Krad_4380"/>
<dbReference type="eggNOG" id="COG0603">
    <property type="taxonomic scope" value="Bacteria"/>
</dbReference>
<dbReference type="HOGENOM" id="CLU_081854_1_1_11"/>
<dbReference type="OrthoDB" id="9789567at2"/>
<dbReference type="UniPathway" id="UPA00391"/>
<dbReference type="Proteomes" id="UP000001116">
    <property type="component" value="Chromosome"/>
</dbReference>
<dbReference type="GO" id="GO:0005524">
    <property type="term" value="F:ATP binding"/>
    <property type="evidence" value="ECO:0007669"/>
    <property type="project" value="UniProtKB-UniRule"/>
</dbReference>
<dbReference type="GO" id="GO:0016879">
    <property type="term" value="F:ligase activity, forming carbon-nitrogen bonds"/>
    <property type="evidence" value="ECO:0007669"/>
    <property type="project" value="UniProtKB-UniRule"/>
</dbReference>
<dbReference type="GO" id="GO:0008270">
    <property type="term" value="F:zinc ion binding"/>
    <property type="evidence" value="ECO:0007669"/>
    <property type="project" value="UniProtKB-UniRule"/>
</dbReference>
<dbReference type="GO" id="GO:0008616">
    <property type="term" value="P:queuosine biosynthetic process"/>
    <property type="evidence" value="ECO:0007669"/>
    <property type="project" value="UniProtKB-UniRule"/>
</dbReference>
<dbReference type="CDD" id="cd01995">
    <property type="entry name" value="QueC-like"/>
    <property type="match status" value="1"/>
</dbReference>
<dbReference type="Gene3D" id="3.40.50.620">
    <property type="entry name" value="HUPs"/>
    <property type="match status" value="1"/>
</dbReference>
<dbReference type="HAMAP" id="MF_01633">
    <property type="entry name" value="QueC"/>
    <property type="match status" value="1"/>
</dbReference>
<dbReference type="InterPro" id="IPR018317">
    <property type="entry name" value="QueC"/>
</dbReference>
<dbReference type="InterPro" id="IPR014729">
    <property type="entry name" value="Rossmann-like_a/b/a_fold"/>
</dbReference>
<dbReference type="NCBIfam" id="TIGR00364">
    <property type="entry name" value="7-cyano-7-deazaguanine synthase QueC"/>
    <property type="match status" value="1"/>
</dbReference>
<dbReference type="PANTHER" id="PTHR42914">
    <property type="entry name" value="7-CYANO-7-DEAZAGUANINE SYNTHASE"/>
    <property type="match status" value="1"/>
</dbReference>
<dbReference type="PANTHER" id="PTHR42914:SF1">
    <property type="entry name" value="7-CYANO-7-DEAZAGUANINE SYNTHASE"/>
    <property type="match status" value="1"/>
</dbReference>
<dbReference type="Pfam" id="PF06508">
    <property type="entry name" value="QueC"/>
    <property type="match status" value="1"/>
</dbReference>
<dbReference type="PIRSF" id="PIRSF006293">
    <property type="entry name" value="ExsB"/>
    <property type="match status" value="1"/>
</dbReference>
<dbReference type="SUPFAM" id="SSF52402">
    <property type="entry name" value="Adenine nucleotide alpha hydrolases-like"/>
    <property type="match status" value="1"/>
</dbReference>
<organism>
    <name type="scientific">Kineococcus radiotolerans (strain ATCC BAA-149 / DSM 14245 / SRS30216)</name>
    <dbReference type="NCBI Taxonomy" id="266940"/>
    <lineage>
        <taxon>Bacteria</taxon>
        <taxon>Bacillati</taxon>
        <taxon>Actinomycetota</taxon>
        <taxon>Actinomycetes</taxon>
        <taxon>Kineosporiales</taxon>
        <taxon>Kineosporiaceae</taxon>
        <taxon>Kineococcus</taxon>
    </lineage>
</organism>
<feature type="chain" id="PRO_1000088154" description="7-cyano-7-deazaguanine synthase">
    <location>
        <begin position="1"/>
        <end position="229"/>
    </location>
</feature>
<feature type="binding site" evidence="1">
    <location>
        <begin position="9"/>
        <end position="19"/>
    </location>
    <ligand>
        <name>ATP</name>
        <dbReference type="ChEBI" id="CHEBI:30616"/>
    </ligand>
</feature>
<feature type="binding site" evidence="1">
    <location>
        <position position="192"/>
    </location>
    <ligand>
        <name>Zn(2+)</name>
        <dbReference type="ChEBI" id="CHEBI:29105"/>
    </ligand>
</feature>
<feature type="binding site" evidence="1">
    <location>
        <position position="202"/>
    </location>
    <ligand>
        <name>Zn(2+)</name>
        <dbReference type="ChEBI" id="CHEBI:29105"/>
    </ligand>
</feature>
<feature type="binding site" evidence="1">
    <location>
        <position position="205"/>
    </location>
    <ligand>
        <name>Zn(2+)</name>
        <dbReference type="ChEBI" id="CHEBI:29105"/>
    </ligand>
</feature>
<feature type="binding site" evidence="1">
    <location>
        <position position="208"/>
    </location>
    <ligand>
        <name>Zn(2+)</name>
        <dbReference type="ChEBI" id="CHEBI:29105"/>
    </ligand>
</feature>
<keyword id="KW-0067">ATP-binding</keyword>
<keyword id="KW-0436">Ligase</keyword>
<keyword id="KW-0479">Metal-binding</keyword>
<keyword id="KW-0547">Nucleotide-binding</keyword>
<keyword id="KW-0671">Queuosine biosynthesis</keyword>
<keyword id="KW-1185">Reference proteome</keyword>
<keyword id="KW-0862">Zinc</keyword>
<proteinExistence type="inferred from homology"/>